<proteinExistence type="inferred from homology"/>
<evidence type="ECO:0000255" key="1">
    <source>
        <dbReference type="HAMAP-Rule" id="MF_01310"/>
    </source>
</evidence>
<evidence type="ECO:0000305" key="2"/>
<protein>
    <recommendedName>
        <fullName evidence="1">Small ribosomal subunit protein uS11</fullName>
    </recommendedName>
    <alternativeName>
        <fullName evidence="2">30S ribosomal protein S11</fullName>
    </alternativeName>
</protein>
<sequence>MATKKGTRKRRVKKNIETGVAHIHSTFNNTLIMITDVQGNAVAWSSAGVLGFKGSRKSTPFAAQMASEAAAKQAMEHGMKTVEVEVKGPGSGRESAIRALQTTGLEVTAIRDVTPVPHNGSRPPKRRRV</sequence>
<organism>
    <name type="scientific">Limosilactobacillus fermentum (strain NBRC 3956 / LMG 18251)</name>
    <name type="common">Lactobacillus fermentum</name>
    <dbReference type="NCBI Taxonomy" id="334390"/>
    <lineage>
        <taxon>Bacteria</taxon>
        <taxon>Bacillati</taxon>
        <taxon>Bacillota</taxon>
        <taxon>Bacilli</taxon>
        <taxon>Lactobacillales</taxon>
        <taxon>Lactobacillaceae</taxon>
        <taxon>Limosilactobacillus</taxon>
    </lineage>
</organism>
<reference key="1">
    <citation type="journal article" date="2008" name="DNA Res.">
        <title>Comparative genome analysis of Lactobacillus reuteri and Lactobacillus fermentum reveal a genomic island for reuterin and cobalamin production.</title>
        <authorList>
            <person name="Morita H."/>
            <person name="Toh H."/>
            <person name="Fukuda S."/>
            <person name="Horikawa H."/>
            <person name="Oshima K."/>
            <person name="Suzuki T."/>
            <person name="Murakami M."/>
            <person name="Hisamatsu S."/>
            <person name="Kato Y."/>
            <person name="Takizawa T."/>
            <person name="Fukuoka H."/>
            <person name="Yoshimura T."/>
            <person name="Itoh K."/>
            <person name="O'Sullivan D.J."/>
            <person name="McKay L.L."/>
            <person name="Ohno H."/>
            <person name="Kikuchi J."/>
            <person name="Masaoka T."/>
            <person name="Hattori M."/>
        </authorList>
    </citation>
    <scope>NUCLEOTIDE SEQUENCE [LARGE SCALE GENOMIC DNA]</scope>
    <source>
        <strain>NBRC 3956 / LMG 18251</strain>
    </source>
</reference>
<gene>
    <name evidence="1" type="primary">rpsK</name>
    <name type="ordered locus">LAF_1490</name>
</gene>
<accession>B2GDU4</accession>
<comment type="function">
    <text evidence="1">Located on the platform of the 30S subunit, it bridges several disparate RNA helices of the 16S rRNA. Forms part of the Shine-Dalgarno cleft in the 70S ribosome.</text>
</comment>
<comment type="subunit">
    <text evidence="1">Part of the 30S ribosomal subunit. Interacts with proteins S7 and S18. Binds to IF-3.</text>
</comment>
<comment type="similarity">
    <text evidence="1">Belongs to the universal ribosomal protein uS11 family.</text>
</comment>
<dbReference type="EMBL" id="AP008937">
    <property type="protein sequence ID" value="BAG27826.1"/>
    <property type="molecule type" value="Genomic_DNA"/>
</dbReference>
<dbReference type="RefSeq" id="WP_003681613.1">
    <property type="nucleotide sequence ID" value="NC_010610.1"/>
</dbReference>
<dbReference type="SMR" id="B2GDU4"/>
<dbReference type="GeneID" id="83716133"/>
<dbReference type="KEGG" id="lfe:LAF_1490"/>
<dbReference type="eggNOG" id="COG0100">
    <property type="taxonomic scope" value="Bacteria"/>
</dbReference>
<dbReference type="HOGENOM" id="CLU_072439_5_0_9"/>
<dbReference type="Proteomes" id="UP000001697">
    <property type="component" value="Chromosome"/>
</dbReference>
<dbReference type="GO" id="GO:1990904">
    <property type="term" value="C:ribonucleoprotein complex"/>
    <property type="evidence" value="ECO:0007669"/>
    <property type="project" value="UniProtKB-KW"/>
</dbReference>
<dbReference type="GO" id="GO:0005840">
    <property type="term" value="C:ribosome"/>
    <property type="evidence" value="ECO:0007669"/>
    <property type="project" value="UniProtKB-KW"/>
</dbReference>
<dbReference type="GO" id="GO:0019843">
    <property type="term" value="F:rRNA binding"/>
    <property type="evidence" value="ECO:0007669"/>
    <property type="project" value="UniProtKB-UniRule"/>
</dbReference>
<dbReference type="GO" id="GO:0003735">
    <property type="term" value="F:structural constituent of ribosome"/>
    <property type="evidence" value="ECO:0007669"/>
    <property type="project" value="InterPro"/>
</dbReference>
<dbReference type="GO" id="GO:0006412">
    <property type="term" value="P:translation"/>
    <property type="evidence" value="ECO:0007669"/>
    <property type="project" value="UniProtKB-UniRule"/>
</dbReference>
<dbReference type="FunFam" id="3.30.420.80:FF:000001">
    <property type="entry name" value="30S ribosomal protein S11"/>
    <property type="match status" value="1"/>
</dbReference>
<dbReference type="Gene3D" id="3.30.420.80">
    <property type="entry name" value="Ribosomal protein S11"/>
    <property type="match status" value="1"/>
</dbReference>
<dbReference type="HAMAP" id="MF_01310">
    <property type="entry name" value="Ribosomal_uS11"/>
    <property type="match status" value="1"/>
</dbReference>
<dbReference type="InterPro" id="IPR001971">
    <property type="entry name" value="Ribosomal_uS11"/>
</dbReference>
<dbReference type="InterPro" id="IPR019981">
    <property type="entry name" value="Ribosomal_uS11_bac-type"/>
</dbReference>
<dbReference type="InterPro" id="IPR018102">
    <property type="entry name" value="Ribosomal_uS11_CS"/>
</dbReference>
<dbReference type="InterPro" id="IPR036967">
    <property type="entry name" value="Ribosomal_uS11_sf"/>
</dbReference>
<dbReference type="NCBIfam" id="NF003698">
    <property type="entry name" value="PRK05309.1"/>
    <property type="match status" value="1"/>
</dbReference>
<dbReference type="NCBIfam" id="TIGR03632">
    <property type="entry name" value="uS11_bact"/>
    <property type="match status" value="1"/>
</dbReference>
<dbReference type="PANTHER" id="PTHR11759">
    <property type="entry name" value="40S RIBOSOMAL PROTEIN S14/30S RIBOSOMAL PROTEIN S11"/>
    <property type="match status" value="1"/>
</dbReference>
<dbReference type="Pfam" id="PF00411">
    <property type="entry name" value="Ribosomal_S11"/>
    <property type="match status" value="1"/>
</dbReference>
<dbReference type="PIRSF" id="PIRSF002131">
    <property type="entry name" value="Ribosomal_S11"/>
    <property type="match status" value="1"/>
</dbReference>
<dbReference type="SUPFAM" id="SSF53137">
    <property type="entry name" value="Translational machinery components"/>
    <property type="match status" value="1"/>
</dbReference>
<dbReference type="PROSITE" id="PS00054">
    <property type="entry name" value="RIBOSOMAL_S11"/>
    <property type="match status" value="1"/>
</dbReference>
<name>RS11_LIMF3</name>
<keyword id="KW-1185">Reference proteome</keyword>
<keyword id="KW-0687">Ribonucleoprotein</keyword>
<keyword id="KW-0689">Ribosomal protein</keyword>
<keyword id="KW-0694">RNA-binding</keyword>
<keyword id="KW-0699">rRNA-binding</keyword>
<feature type="chain" id="PRO_1000141104" description="Small ribosomal subunit protein uS11">
    <location>
        <begin position="1"/>
        <end position="129"/>
    </location>
</feature>